<dbReference type="EC" id="3.5.1.44" evidence="1"/>
<dbReference type="EMBL" id="CP000958">
    <property type="protein sequence ID" value="ACA89422.1"/>
    <property type="molecule type" value="Genomic_DNA"/>
</dbReference>
<dbReference type="RefSeq" id="WP_012327705.1">
    <property type="nucleotide sequence ID" value="NC_010508.1"/>
</dbReference>
<dbReference type="SMR" id="B1JTI2"/>
<dbReference type="GeneID" id="83047037"/>
<dbReference type="KEGG" id="bcm:Bcenmc03_0242"/>
<dbReference type="HOGENOM" id="CLU_087854_0_0_4"/>
<dbReference type="Proteomes" id="UP000002169">
    <property type="component" value="Chromosome 1"/>
</dbReference>
<dbReference type="GO" id="GO:0050568">
    <property type="term" value="F:protein-glutamine glutaminase activity"/>
    <property type="evidence" value="ECO:0007669"/>
    <property type="project" value="UniProtKB-UniRule"/>
</dbReference>
<dbReference type="GO" id="GO:0006935">
    <property type="term" value="P:chemotaxis"/>
    <property type="evidence" value="ECO:0007669"/>
    <property type="project" value="UniProtKB-UniRule"/>
</dbReference>
<dbReference type="CDD" id="cd16352">
    <property type="entry name" value="CheD"/>
    <property type="match status" value="1"/>
</dbReference>
<dbReference type="Gene3D" id="3.30.1330.200">
    <property type="match status" value="1"/>
</dbReference>
<dbReference type="HAMAP" id="MF_01440">
    <property type="entry name" value="CheD"/>
    <property type="match status" value="1"/>
</dbReference>
<dbReference type="InterPro" id="IPR038592">
    <property type="entry name" value="CheD-like_sf"/>
</dbReference>
<dbReference type="InterPro" id="IPR005659">
    <property type="entry name" value="Chemorcpt_Glu_NH3ase_CheD"/>
</dbReference>
<dbReference type="InterPro" id="IPR011324">
    <property type="entry name" value="Cytotoxic_necrot_fac-like_cat"/>
</dbReference>
<dbReference type="NCBIfam" id="NF010013">
    <property type="entry name" value="PRK13487.1"/>
    <property type="match status" value="1"/>
</dbReference>
<dbReference type="NCBIfam" id="NF010014">
    <property type="entry name" value="PRK13489.1"/>
    <property type="match status" value="1"/>
</dbReference>
<dbReference type="PANTHER" id="PTHR35147">
    <property type="entry name" value="CHEMORECEPTOR GLUTAMINE DEAMIDASE CHED-RELATED"/>
    <property type="match status" value="1"/>
</dbReference>
<dbReference type="PANTHER" id="PTHR35147:SF2">
    <property type="entry name" value="CHEMORECEPTOR GLUTAMINE DEAMIDASE CHED-RELATED"/>
    <property type="match status" value="1"/>
</dbReference>
<dbReference type="Pfam" id="PF03975">
    <property type="entry name" value="CheD"/>
    <property type="match status" value="1"/>
</dbReference>
<dbReference type="SUPFAM" id="SSF64438">
    <property type="entry name" value="CNF1/YfiH-like putative cysteine hydrolases"/>
    <property type="match status" value="1"/>
</dbReference>
<evidence type="ECO:0000255" key="1">
    <source>
        <dbReference type="HAMAP-Rule" id="MF_01440"/>
    </source>
</evidence>
<evidence type="ECO:0000256" key="2">
    <source>
        <dbReference type="SAM" id="MobiDB-lite"/>
    </source>
</evidence>
<sequence length="247" mass="26755">MSALPIATNRYFDNHFERPGVKLLPNEFYTTAEDMVLMTVLGSCVAACLHDPYAGIGGMNHFMLPDDGADPGAAASESMRYGAYAMEVLINELIKAGGRRERFEAKVFGGAAVLAGMTTINIGDRNADFVRRYLALERIRITAEDLQGVHPRKVAFMPHSGRAMVKKLRLQVPGVTEREAALAREADRLRAARTRAQVELFAAKRPAAPQPARPRIELFGGRGTTPGAGSQAAGSPYAANLSRKQEA</sequence>
<organism>
    <name type="scientific">Burkholderia orbicola (strain MC0-3)</name>
    <dbReference type="NCBI Taxonomy" id="406425"/>
    <lineage>
        <taxon>Bacteria</taxon>
        <taxon>Pseudomonadati</taxon>
        <taxon>Pseudomonadota</taxon>
        <taxon>Betaproteobacteria</taxon>
        <taxon>Burkholderiales</taxon>
        <taxon>Burkholderiaceae</taxon>
        <taxon>Burkholderia</taxon>
        <taxon>Burkholderia cepacia complex</taxon>
        <taxon>Burkholderia orbicola</taxon>
    </lineage>
</organism>
<comment type="function">
    <text evidence="1">Probably deamidates glutamine residues to glutamate on methyl-accepting chemotaxis receptors (MCPs), playing an important role in chemotaxis.</text>
</comment>
<comment type="catalytic activity">
    <reaction evidence="1">
        <text>L-glutaminyl-[protein] + H2O = L-glutamyl-[protein] + NH4(+)</text>
        <dbReference type="Rhea" id="RHEA:16441"/>
        <dbReference type="Rhea" id="RHEA-COMP:10207"/>
        <dbReference type="Rhea" id="RHEA-COMP:10208"/>
        <dbReference type="ChEBI" id="CHEBI:15377"/>
        <dbReference type="ChEBI" id="CHEBI:28938"/>
        <dbReference type="ChEBI" id="CHEBI:29973"/>
        <dbReference type="ChEBI" id="CHEBI:30011"/>
        <dbReference type="EC" id="3.5.1.44"/>
    </reaction>
</comment>
<comment type="similarity">
    <text evidence="1">Belongs to the CheD family.</text>
</comment>
<protein>
    <recommendedName>
        <fullName evidence="1">Probable chemoreceptor glutamine deamidase CheD</fullName>
        <ecNumber evidence="1">3.5.1.44</ecNumber>
    </recommendedName>
</protein>
<reference key="1">
    <citation type="submission" date="2008-02" db="EMBL/GenBank/DDBJ databases">
        <title>Complete sequence of chromosome 1 of Burkholderia cenocepacia MC0-3.</title>
        <authorList>
            <person name="Copeland A."/>
            <person name="Lucas S."/>
            <person name="Lapidus A."/>
            <person name="Barry K."/>
            <person name="Bruce D."/>
            <person name="Goodwin L."/>
            <person name="Glavina del Rio T."/>
            <person name="Dalin E."/>
            <person name="Tice H."/>
            <person name="Pitluck S."/>
            <person name="Chain P."/>
            <person name="Malfatti S."/>
            <person name="Shin M."/>
            <person name="Vergez L."/>
            <person name="Schmutz J."/>
            <person name="Larimer F."/>
            <person name="Land M."/>
            <person name="Hauser L."/>
            <person name="Kyrpides N."/>
            <person name="Mikhailova N."/>
            <person name="Tiedje J."/>
            <person name="Richardson P."/>
        </authorList>
    </citation>
    <scope>NUCLEOTIDE SEQUENCE [LARGE SCALE GENOMIC DNA]</scope>
    <source>
        <strain>MC0-3</strain>
    </source>
</reference>
<proteinExistence type="inferred from homology"/>
<accession>B1JTI2</accession>
<keyword id="KW-0145">Chemotaxis</keyword>
<keyword id="KW-0378">Hydrolase</keyword>
<feature type="chain" id="PRO_1000145886" description="Probable chemoreceptor glutamine deamidase CheD">
    <location>
        <begin position="1"/>
        <end position="247"/>
    </location>
</feature>
<feature type="region of interest" description="Disordered" evidence="2">
    <location>
        <begin position="204"/>
        <end position="247"/>
    </location>
</feature>
<gene>
    <name evidence="1" type="primary">cheD</name>
    <name type="ordered locus">Bcenmc03_0242</name>
</gene>
<name>CHED_BURO0</name>